<protein>
    <recommendedName>
        <fullName evidence="1">tRNA uridine 5-carboxymethylaminomethyl modification enzyme MnmG</fullName>
    </recommendedName>
    <alternativeName>
        <fullName evidence="1">Glucose-inhibited division protein A</fullName>
    </alternativeName>
</protein>
<keyword id="KW-0963">Cytoplasm</keyword>
<keyword id="KW-0274">FAD</keyword>
<keyword id="KW-0285">Flavoprotein</keyword>
<keyword id="KW-0520">NAD</keyword>
<keyword id="KW-0819">tRNA processing</keyword>
<organism>
    <name type="scientific">Anaplasma phagocytophilum (strain HZ)</name>
    <dbReference type="NCBI Taxonomy" id="212042"/>
    <lineage>
        <taxon>Bacteria</taxon>
        <taxon>Pseudomonadati</taxon>
        <taxon>Pseudomonadota</taxon>
        <taxon>Alphaproteobacteria</taxon>
        <taxon>Rickettsiales</taxon>
        <taxon>Anaplasmataceae</taxon>
        <taxon>Anaplasma</taxon>
        <taxon>phagocytophilum group</taxon>
    </lineage>
</organism>
<feature type="chain" id="PRO_1000016544" description="tRNA uridine 5-carboxymethylaminomethyl modification enzyme MnmG">
    <location>
        <begin position="1"/>
        <end position="628"/>
    </location>
</feature>
<feature type="binding site" evidence="1">
    <location>
        <begin position="10"/>
        <end position="15"/>
    </location>
    <ligand>
        <name>FAD</name>
        <dbReference type="ChEBI" id="CHEBI:57692"/>
    </ligand>
</feature>
<feature type="binding site" evidence="1">
    <location>
        <position position="122"/>
    </location>
    <ligand>
        <name>FAD</name>
        <dbReference type="ChEBI" id="CHEBI:57692"/>
    </ligand>
</feature>
<feature type="binding site" evidence="1">
    <location>
        <position position="181"/>
    </location>
    <ligand>
        <name>FAD</name>
        <dbReference type="ChEBI" id="CHEBI:57692"/>
    </ligand>
</feature>
<feature type="binding site" evidence="1">
    <location>
        <begin position="274"/>
        <end position="288"/>
    </location>
    <ligand>
        <name>NAD(+)</name>
        <dbReference type="ChEBI" id="CHEBI:57540"/>
    </ligand>
</feature>
<feature type="binding site" evidence="1">
    <location>
        <position position="371"/>
    </location>
    <ligand>
        <name>FAD</name>
        <dbReference type="ChEBI" id="CHEBI:57692"/>
    </ligand>
</feature>
<reference key="1">
    <citation type="journal article" date="2006" name="PLoS Genet.">
        <title>Comparative genomics of emerging human ehrlichiosis agents.</title>
        <authorList>
            <person name="Dunning Hotopp J.C."/>
            <person name="Lin M."/>
            <person name="Madupu R."/>
            <person name="Crabtree J."/>
            <person name="Angiuoli S.V."/>
            <person name="Eisen J.A."/>
            <person name="Seshadri R."/>
            <person name="Ren Q."/>
            <person name="Wu M."/>
            <person name="Utterback T.R."/>
            <person name="Smith S."/>
            <person name="Lewis M."/>
            <person name="Khouri H."/>
            <person name="Zhang C."/>
            <person name="Niu H."/>
            <person name="Lin Q."/>
            <person name="Ohashi N."/>
            <person name="Zhi N."/>
            <person name="Nelson W.C."/>
            <person name="Brinkac L.M."/>
            <person name="Dodson R.J."/>
            <person name="Rosovitz M.J."/>
            <person name="Sundaram J.P."/>
            <person name="Daugherty S.C."/>
            <person name="Davidsen T."/>
            <person name="Durkin A.S."/>
            <person name="Gwinn M.L."/>
            <person name="Haft D.H."/>
            <person name="Selengut J.D."/>
            <person name="Sullivan S.A."/>
            <person name="Zafar N."/>
            <person name="Zhou L."/>
            <person name="Benahmed F."/>
            <person name="Forberger H."/>
            <person name="Halpin R."/>
            <person name="Mulligan S."/>
            <person name="Robinson J."/>
            <person name="White O."/>
            <person name="Rikihisa Y."/>
            <person name="Tettelin H."/>
        </authorList>
    </citation>
    <scope>NUCLEOTIDE SEQUENCE [LARGE SCALE GENOMIC DNA]</scope>
    <source>
        <strain>HZ</strain>
    </source>
</reference>
<gene>
    <name evidence="1" type="primary">mnmG</name>
    <name evidence="1" type="synonym">gidA</name>
    <name type="ordered locus">APH_0224</name>
</gene>
<accession>Q2GLA8</accession>
<name>MNMG_ANAPZ</name>
<sequence length="628" mass="69245">MQNYDVVVVGGGHAGCEAAAAAARVGAKTLLVTHKVESIGEMSCNPAIGGIAKGVVVREVDALDGLMGKVIDKSSIHSIILNRSKGPAVWGPRAQADREVYKPTMRDMVLHYENLTVISEEVVDFTVDGVEERPQISSVLLSNGELIKTTRLVFATGTFLGGTIHVGNESFPAGRIGDKPSTKLPQALTAHGFQLGRLKTGTPPRIDRDSINWSKLLEQKGDVLPTPFSFMSECVSLPQISCYVTHTNEKTHEIIRRNLHLAGSRCESLLDVMAPRYCPSIEEKIRRFPDHKSHQIFLEPEGLETNSVYPNGISTSCPIEVQLEMLRSINGLEQAVMLRHGYTVEYNFIDPRELYHTLETKKIKGLFCAGQINGTTGYEEAAGQGIVAGANAALSLVQNQEPLVLKRSDSYIGVMIDDLVTLGTSEPYRLFTSRAEYRLTLRSDNADMRLTEIGRAYSLVSQERFDRLSQKKQEMHALLNALKGIVATPNDIAEYDIAIAQNGEKKNAFELLSHPNINMEVLLKIWPSLRSFSAGTLALMEIEGKYAPYLKRQEADIKSFLEEENLSIPKDILYSDVYGLSKEAQEKLQAVKPFSIGAARRIPGITPAAIANILIHLRCKHKSSHKSL</sequence>
<dbReference type="EMBL" id="CP000235">
    <property type="protein sequence ID" value="ABD43917.1"/>
    <property type="molecule type" value="Genomic_DNA"/>
</dbReference>
<dbReference type="RefSeq" id="WP_011450366.1">
    <property type="nucleotide sequence ID" value="NC_007797.1"/>
</dbReference>
<dbReference type="SMR" id="Q2GLA8"/>
<dbReference type="STRING" id="212042.APH_0224"/>
<dbReference type="PaxDb" id="212042-APH_0224"/>
<dbReference type="EnsemblBacteria" id="ABD43917">
    <property type="protein sequence ID" value="ABD43917"/>
    <property type="gene ID" value="APH_0224"/>
</dbReference>
<dbReference type="GeneID" id="92747564"/>
<dbReference type="KEGG" id="aph:APH_0224"/>
<dbReference type="eggNOG" id="COG0445">
    <property type="taxonomic scope" value="Bacteria"/>
</dbReference>
<dbReference type="HOGENOM" id="CLU_007831_2_2_5"/>
<dbReference type="Proteomes" id="UP000001943">
    <property type="component" value="Chromosome"/>
</dbReference>
<dbReference type="GO" id="GO:0005829">
    <property type="term" value="C:cytosol"/>
    <property type="evidence" value="ECO:0007669"/>
    <property type="project" value="TreeGrafter"/>
</dbReference>
<dbReference type="GO" id="GO:0050660">
    <property type="term" value="F:flavin adenine dinucleotide binding"/>
    <property type="evidence" value="ECO:0007669"/>
    <property type="project" value="UniProtKB-UniRule"/>
</dbReference>
<dbReference type="GO" id="GO:0030488">
    <property type="term" value="P:tRNA methylation"/>
    <property type="evidence" value="ECO:0007669"/>
    <property type="project" value="TreeGrafter"/>
</dbReference>
<dbReference type="GO" id="GO:0002098">
    <property type="term" value="P:tRNA wobble uridine modification"/>
    <property type="evidence" value="ECO:0007669"/>
    <property type="project" value="InterPro"/>
</dbReference>
<dbReference type="FunFam" id="3.50.50.60:FF:000082">
    <property type="entry name" value="protein MTO1 homolog, mitochondrial isoform X1"/>
    <property type="match status" value="1"/>
</dbReference>
<dbReference type="FunFam" id="1.10.150.570:FF:000001">
    <property type="entry name" value="tRNA uridine 5-carboxymethylaminomethyl modification enzyme MnmG"/>
    <property type="match status" value="1"/>
</dbReference>
<dbReference type="FunFam" id="3.50.50.60:FF:000002">
    <property type="entry name" value="tRNA uridine 5-carboxymethylaminomethyl modification enzyme MnmG"/>
    <property type="match status" value="1"/>
</dbReference>
<dbReference type="Gene3D" id="3.50.50.60">
    <property type="entry name" value="FAD/NAD(P)-binding domain"/>
    <property type="match status" value="2"/>
</dbReference>
<dbReference type="Gene3D" id="1.10.150.570">
    <property type="entry name" value="GidA associated domain, C-terminal subdomain"/>
    <property type="match status" value="1"/>
</dbReference>
<dbReference type="Gene3D" id="1.10.10.1800">
    <property type="entry name" value="tRNA uridine 5-carboxymethylaminomethyl modification enzyme MnmG/GidA"/>
    <property type="match status" value="1"/>
</dbReference>
<dbReference type="HAMAP" id="MF_00129">
    <property type="entry name" value="MnmG_GidA"/>
    <property type="match status" value="1"/>
</dbReference>
<dbReference type="InterPro" id="IPR036188">
    <property type="entry name" value="FAD/NAD-bd_sf"/>
</dbReference>
<dbReference type="InterPro" id="IPR049312">
    <property type="entry name" value="GIDA_C_N"/>
</dbReference>
<dbReference type="InterPro" id="IPR004416">
    <property type="entry name" value="MnmG"/>
</dbReference>
<dbReference type="InterPro" id="IPR002218">
    <property type="entry name" value="MnmG-rel"/>
</dbReference>
<dbReference type="InterPro" id="IPR020595">
    <property type="entry name" value="MnmG-rel_CS"/>
</dbReference>
<dbReference type="InterPro" id="IPR026904">
    <property type="entry name" value="MnmG_C"/>
</dbReference>
<dbReference type="InterPro" id="IPR047001">
    <property type="entry name" value="MnmG_C_subdom"/>
</dbReference>
<dbReference type="InterPro" id="IPR044920">
    <property type="entry name" value="MnmG_C_subdom_sf"/>
</dbReference>
<dbReference type="InterPro" id="IPR040131">
    <property type="entry name" value="MnmG_N"/>
</dbReference>
<dbReference type="NCBIfam" id="TIGR00136">
    <property type="entry name" value="mnmG_gidA"/>
    <property type="match status" value="1"/>
</dbReference>
<dbReference type="PANTHER" id="PTHR11806">
    <property type="entry name" value="GLUCOSE INHIBITED DIVISION PROTEIN A"/>
    <property type="match status" value="1"/>
</dbReference>
<dbReference type="PANTHER" id="PTHR11806:SF0">
    <property type="entry name" value="PROTEIN MTO1 HOMOLOG, MITOCHONDRIAL"/>
    <property type="match status" value="1"/>
</dbReference>
<dbReference type="Pfam" id="PF01134">
    <property type="entry name" value="GIDA"/>
    <property type="match status" value="1"/>
</dbReference>
<dbReference type="Pfam" id="PF21680">
    <property type="entry name" value="GIDA_C_1st"/>
    <property type="match status" value="1"/>
</dbReference>
<dbReference type="Pfam" id="PF13932">
    <property type="entry name" value="SAM_GIDA_C"/>
    <property type="match status" value="1"/>
</dbReference>
<dbReference type="SMART" id="SM01228">
    <property type="entry name" value="GIDA_assoc_3"/>
    <property type="match status" value="1"/>
</dbReference>
<dbReference type="SUPFAM" id="SSF51905">
    <property type="entry name" value="FAD/NAD(P)-binding domain"/>
    <property type="match status" value="1"/>
</dbReference>
<dbReference type="PROSITE" id="PS01280">
    <property type="entry name" value="GIDA_1"/>
    <property type="match status" value="1"/>
</dbReference>
<dbReference type="PROSITE" id="PS01281">
    <property type="entry name" value="GIDA_2"/>
    <property type="match status" value="1"/>
</dbReference>
<evidence type="ECO:0000255" key="1">
    <source>
        <dbReference type="HAMAP-Rule" id="MF_00129"/>
    </source>
</evidence>
<proteinExistence type="inferred from homology"/>
<comment type="function">
    <text evidence="1">NAD-binding protein involved in the addition of a carboxymethylaminomethyl (cmnm) group at the wobble position (U34) of certain tRNAs, forming tRNA-cmnm(5)s(2)U34.</text>
</comment>
<comment type="cofactor">
    <cofactor evidence="1">
        <name>FAD</name>
        <dbReference type="ChEBI" id="CHEBI:57692"/>
    </cofactor>
</comment>
<comment type="subunit">
    <text evidence="1">Homodimer. Heterotetramer of two MnmE and two MnmG subunits.</text>
</comment>
<comment type="subcellular location">
    <subcellularLocation>
        <location evidence="1">Cytoplasm</location>
    </subcellularLocation>
</comment>
<comment type="similarity">
    <text evidence="1">Belongs to the MnmG family.</text>
</comment>